<evidence type="ECO:0000250" key="1"/>
<evidence type="ECO:0000255" key="2">
    <source>
        <dbReference type="HAMAP-Rule" id="MF_00100"/>
    </source>
</evidence>
<evidence type="ECO:0000256" key="3">
    <source>
        <dbReference type="SAM" id="MobiDB-lite"/>
    </source>
</evidence>
<name>IF2_WOLTR</name>
<organism>
    <name type="scientific">Wolbachia sp. subsp. Brugia malayi (strain TRS)</name>
    <dbReference type="NCBI Taxonomy" id="292805"/>
    <lineage>
        <taxon>Bacteria</taxon>
        <taxon>Pseudomonadati</taxon>
        <taxon>Pseudomonadota</taxon>
        <taxon>Alphaproteobacteria</taxon>
        <taxon>Rickettsiales</taxon>
        <taxon>Anaplasmataceae</taxon>
        <taxon>Wolbachieae</taxon>
        <taxon>Wolbachia</taxon>
    </lineage>
</organism>
<proteinExistence type="inferred from homology"/>
<feature type="chain" id="PRO_0000228260" description="Translation initiation factor IF-2">
    <location>
        <begin position="1"/>
        <end position="777"/>
    </location>
</feature>
<feature type="domain" description="tr-type G">
    <location>
        <begin position="279"/>
        <end position="449"/>
    </location>
</feature>
<feature type="region of interest" description="Disordered" evidence="3">
    <location>
        <begin position="30"/>
        <end position="54"/>
    </location>
</feature>
<feature type="region of interest" description="Disordered" evidence="3">
    <location>
        <begin position="98"/>
        <end position="117"/>
    </location>
</feature>
<feature type="region of interest" description="G1" evidence="1">
    <location>
        <begin position="288"/>
        <end position="295"/>
    </location>
</feature>
<feature type="region of interest" description="G2" evidence="1">
    <location>
        <begin position="313"/>
        <end position="317"/>
    </location>
</feature>
<feature type="region of interest" description="G3" evidence="1">
    <location>
        <begin position="334"/>
        <end position="337"/>
    </location>
</feature>
<feature type="region of interest" description="G4" evidence="1">
    <location>
        <begin position="388"/>
        <end position="391"/>
    </location>
</feature>
<feature type="region of interest" description="G5" evidence="1">
    <location>
        <begin position="425"/>
        <end position="427"/>
    </location>
</feature>
<feature type="compositionally biased region" description="Basic and acidic residues" evidence="3">
    <location>
        <begin position="98"/>
        <end position="109"/>
    </location>
</feature>
<feature type="binding site" evidence="2">
    <location>
        <begin position="288"/>
        <end position="295"/>
    </location>
    <ligand>
        <name>GTP</name>
        <dbReference type="ChEBI" id="CHEBI:37565"/>
    </ligand>
</feature>
<feature type="binding site" evidence="2">
    <location>
        <begin position="334"/>
        <end position="338"/>
    </location>
    <ligand>
        <name>GTP</name>
        <dbReference type="ChEBI" id="CHEBI:37565"/>
    </ligand>
</feature>
<feature type="binding site" evidence="2">
    <location>
        <begin position="388"/>
        <end position="391"/>
    </location>
    <ligand>
        <name>GTP</name>
        <dbReference type="ChEBI" id="CHEBI:37565"/>
    </ligand>
</feature>
<keyword id="KW-0963">Cytoplasm</keyword>
<keyword id="KW-0342">GTP-binding</keyword>
<keyword id="KW-0396">Initiation factor</keyword>
<keyword id="KW-0547">Nucleotide-binding</keyword>
<keyword id="KW-0648">Protein biosynthesis</keyword>
<keyword id="KW-1185">Reference proteome</keyword>
<dbReference type="EMBL" id="AE017321">
    <property type="protein sequence ID" value="AAW71125.1"/>
    <property type="molecule type" value="Genomic_DNA"/>
</dbReference>
<dbReference type="RefSeq" id="WP_011256735.1">
    <property type="nucleotide sequence ID" value="NC_006833.1"/>
</dbReference>
<dbReference type="SMR" id="Q5GS99"/>
<dbReference type="STRING" id="292805.Wbm0537"/>
<dbReference type="KEGG" id="wbm:Wbm0537"/>
<dbReference type="eggNOG" id="COG0532">
    <property type="taxonomic scope" value="Bacteria"/>
</dbReference>
<dbReference type="HOGENOM" id="CLU_006301_10_2_5"/>
<dbReference type="Proteomes" id="UP000000534">
    <property type="component" value="Chromosome"/>
</dbReference>
<dbReference type="GO" id="GO:0005737">
    <property type="term" value="C:cytoplasm"/>
    <property type="evidence" value="ECO:0007669"/>
    <property type="project" value="UniProtKB-SubCell"/>
</dbReference>
<dbReference type="GO" id="GO:0005525">
    <property type="term" value="F:GTP binding"/>
    <property type="evidence" value="ECO:0007669"/>
    <property type="project" value="UniProtKB-KW"/>
</dbReference>
<dbReference type="GO" id="GO:0003924">
    <property type="term" value="F:GTPase activity"/>
    <property type="evidence" value="ECO:0007669"/>
    <property type="project" value="UniProtKB-UniRule"/>
</dbReference>
<dbReference type="GO" id="GO:0003743">
    <property type="term" value="F:translation initiation factor activity"/>
    <property type="evidence" value="ECO:0007669"/>
    <property type="project" value="UniProtKB-UniRule"/>
</dbReference>
<dbReference type="CDD" id="cd01887">
    <property type="entry name" value="IF2_eIF5B"/>
    <property type="match status" value="1"/>
</dbReference>
<dbReference type="CDD" id="cd03702">
    <property type="entry name" value="IF2_mtIF2_II"/>
    <property type="match status" value="1"/>
</dbReference>
<dbReference type="CDD" id="cd03692">
    <property type="entry name" value="mtIF2_IVc"/>
    <property type="match status" value="1"/>
</dbReference>
<dbReference type="FunFam" id="2.40.30.10:FF:000007">
    <property type="entry name" value="Translation initiation factor IF-2"/>
    <property type="match status" value="1"/>
</dbReference>
<dbReference type="FunFam" id="2.40.30.10:FF:000008">
    <property type="entry name" value="Translation initiation factor IF-2"/>
    <property type="match status" value="1"/>
</dbReference>
<dbReference type="FunFam" id="3.40.50.10050:FF:000001">
    <property type="entry name" value="Translation initiation factor IF-2"/>
    <property type="match status" value="1"/>
</dbReference>
<dbReference type="FunFam" id="3.40.50.300:FF:000019">
    <property type="entry name" value="Translation initiation factor IF-2"/>
    <property type="match status" value="1"/>
</dbReference>
<dbReference type="Gene3D" id="3.40.50.300">
    <property type="entry name" value="P-loop containing nucleotide triphosphate hydrolases"/>
    <property type="match status" value="1"/>
</dbReference>
<dbReference type="Gene3D" id="2.40.30.10">
    <property type="entry name" value="Translation factors"/>
    <property type="match status" value="2"/>
</dbReference>
<dbReference type="Gene3D" id="3.40.50.10050">
    <property type="entry name" value="Translation initiation factor IF- 2, domain 3"/>
    <property type="match status" value="1"/>
</dbReference>
<dbReference type="HAMAP" id="MF_00100_B">
    <property type="entry name" value="IF_2_B"/>
    <property type="match status" value="1"/>
</dbReference>
<dbReference type="InterPro" id="IPR053905">
    <property type="entry name" value="EF-G-like_DII"/>
</dbReference>
<dbReference type="InterPro" id="IPR044145">
    <property type="entry name" value="IF2_II"/>
</dbReference>
<dbReference type="InterPro" id="IPR027417">
    <property type="entry name" value="P-loop_NTPase"/>
</dbReference>
<dbReference type="InterPro" id="IPR005225">
    <property type="entry name" value="Small_GTP-bd"/>
</dbReference>
<dbReference type="InterPro" id="IPR000795">
    <property type="entry name" value="T_Tr_GTP-bd_dom"/>
</dbReference>
<dbReference type="InterPro" id="IPR000178">
    <property type="entry name" value="TF_IF2_bacterial-like"/>
</dbReference>
<dbReference type="InterPro" id="IPR015760">
    <property type="entry name" value="TIF_IF2"/>
</dbReference>
<dbReference type="InterPro" id="IPR023115">
    <property type="entry name" value="TIF_IF2_dom3"/>
</dbReference>
<dbReference type="InterPro" id="IPR036925">
    <property type="entry name" value="TIF_IF2_dom3_sf"/>
</dbReference>
<dbReference type="InterPro" id="IPR009000">
    <property type="entry name" value="Transl_B-barrel_sf"/>
</dbReference>
<dbReference type="NCBIfam" id="TIGR00487">
    <property type="entry name" value="IF-2"/>
    <property type="match status" value="1"/>
</dbReference>
<dbReference type="NCBIfam" id="TIGR00231">
    <property type="entry name" value="small_GTP"/>
    <property type="match status" value="1"/>
</dbReference>
<dbReference type="PANTHER" id="PTHR43381:SF5">
    <property type="entry name" value="TR-TYPE G DOMAIN-CONTAINING PROTEIN"/>
    <property type="match status" value="1"/>
</dbReference>
<dbReference type="PANTHER" id="PTHR43381">
    <property type="entry name" value="TRANSLATION INITIATION FACTOR IF-2-RELATED"/>
    <property type="match status" value="1"/>
</dbReference>
<dbReference type="Pfam" id="PF22042">
    <property type="entry name" value="EF-G_D2"/>
    <property type="match status" value="1"/>
</dbReference>
<dbReference type="Pfam" id="PF00009">
    <property type="entry name" value="GTP_EFTU"/>
    <property type="match status" value="1"/>
</dbReference>
<dbReference type="Pfam" id="PF11987">
    <property type="entry name" value="IF-2"/>
    <property type="match status" value="1"/>
</dbReference>
<dbReference type="SUPFAM" id="SSF52156">
    <property type="entry name" value="Initiation factor IF2/eIF5b, domain 3"/>
    <property type="match status" value="1"/>
</dbReference>
<dbReference type="SUPFAM" id="SSF52540">
    <property type="entry name" value="P-loop containing nucleoside triphosphate hydrolases"/>
    <property type="match status" value="1"/>
</dbReference>
<dbReference type="SUPFAM" id="SSF50447">
    <property type="entry name" value="Translation proteins"/>
    <property type="match status" value="2"/>
</dbReference>
<dbReference type="PROSITE" id="PS51722">
    <property type="entry name" value="G_TR_2"/>
    <property type="match status" value="1"/>
</dbReference>
<dbReference type="PROSITE" id="PS01176">
    <property type="entry name" value="IF2"/>
    <property type="match status" value="1"/>
</dbReference>
<accession>Q5GS99</accession>
<gene>
    <name evidence="2" type="primary">infB</name>
    <name type="ordered locus">Wbm0537</name>
</gene>
<sequence length="777" mass="86324">MNSKDISSKKLTLQGFSKLKLDFNLSSSASPSMGATIVKKRRRKTHDTEEQDENKLLGSLTKKEQISRINAVQNAALLKERNLKEKEAIVKKDSIVKEDSNEKTNDRDSATNTSFKETGKEVLNDVSLVELIENNTDNEDNNKKSLKTNKDIYSKHSKRIIAQSIDDKIEQPSVFKQRFGIRNRKSEFTKGKNISREVIIPDEITIKELSIRMAEDSKSVLKMLKEEMGENYGVDGLVDPEVACEIVEKFNHTAKRVSGANKEKNLFFIEERESLPKKPKPPIVTFMGHVDHGKTSLLDAFRESNVAERELGGITQHIGAYQIITKDKKITFIDTPGHEAFTAMRACGANITNIVVIVVAADDGVMKQTIEAMNHAKAANVSIIVAINKIDRSQSGDVERIISSLPQYDLIPEELGGDVIVVPVSAKKKINLDKLEEAILLIAELMKLEAIEDCRALGWVIESKIDKAKGISATLIVEEGTLKVGDMLVVGTAYGKVRSMVNHLGQREKVALPSSPIEITGLNGIPNAGDKFVVVSSEKQAREIAEYRLELIKEKKEDLSNNNLDMFSRNDSEVEELSVVLKCDVTGSIEAISNSIDKLGKDQVKLNILHKAVGGITDSDVLLAEASSAVILAFNVKVDSKIRDLAKRKGVEIHTYSIIYELIDDMRMYLTKMLKPVTREVRIGSASVRQIFNVSRVGNIIGCYVSDGVVKKDSLIKVMRNNKLIYEGKLKALRRFKDNVKEVGTNFECGVSLDGNVDIKVGDILEAHQLVQEERVL</sequence>
<comment type="function">
    <text evidence="2">One of the essential components for the initiation of protein synthesis. Protects formylmethionyl-tRNA from spontaneous hydrolysis and promotes its binding to the 30S ribosomal subunits. Also involved in the hydrolysis of GTP during the formation of the 70S ribosomal complex.</text>
</comment>
<comment type="subcellular location">
    <subcellularLocation>
        <location evidence="2">Cytoplasm</location>
    </subcellularLocation>
</comment>
<comment type="similarity">
    <text evidence="2">Belongs to the TRAFAC class translation factor GTPase superfamily. Classic translation factor GTPase family. IF-2 subfamily.</text>
</comment>
<reference key="1">
    <citation type="journal article" date="2005" name="PLoS Biol.">
        <title>The Wolbachia genome of Brugia malayi: endosymbiont evolution within a human pathogenic nematode.</title>
        <authorList>
            <person name="Foster J."/>
            <person name="Ganatra M."/>
            <person name="Kamal I."/>
            <person name="Ware J."/>
            <person name="Makarova K."/>
            <person name="Ivanova N."/>
            <person name="Bhattacharyya A."/>
            <person name="Kapatral V."/>
            <person name="Kumar S."/>
            <person name="Posfai J."/>
            <person name="Vincze T."/>
            <person name="Ingram J."/>
            <person name="Moran L."/>
            <person name="Lapidus A."/>
            <person name="Omelchenko M."/>
            <person name="Kyrpides N."/>
            <person name="Ghedin E."/>
            <person name="Wang S."/>
            <person name="Goltsman E."/>
            <person name="Joukov V."/>
            <person name="Ostrovskaya O."/>
            <person name="Tsukerman K."/>
            <person name="Mazur M."/>
            <person name="Comb D."/>
            <person name="Koonin E."/>
            <person name="Slatko B."/>
        </authorList>
    </citation>
    <scope>NUCLEOTIDE SEQUENCE [LARGE SCALE GENOMIC DNA]</scope>
    <source>
        <strain>TRS</strain>
    </source>
</reference>
<protein>
    <recommendedName>
        <fullName evidence="2">Translation initiation factor IF-2</fullName>
    </recommendedName>
</protein>